<sequence length="99" mass="11054">MFEQGLILSAYLLCVGFFGLITSRNMVRALMSLELIFNAITLNFITLSNLFDNRETGEIFTLFVIAVAAAEAATGLAIALSIHRNRRSTRIDQSNLLKW</sequence>
<proteinExistence type="evidence at transcript level"/>
<gene>
    <name evidence="1" type="primary">ndhE</name>
</gene>
<reference key="1">
    <citation type="journal article" date="2003" name="DNA Res.">
        <title>Complete nucleotide sequence of the chloroplast genome from a leptosporangiate fern, Adiantum capillus-veneris L.</title>
        <authorList>
            <person name="Wolf P.G."/>
            <person name="Rowe C.A."/>
            <person name="Sinclair R.B."/>
            <person name="Hasebe M."/>
        </authorList>
    </citation>
    <scope>NUCLEOTIDE SEQUENCE [LARGE SCALE GENOMIC DNA]</scope>
</reference>
<reference key="2">
    <citation type="journal article" date="2004" name="Gene">
        <title>High levels of RNA editing in a vascular plant chloroplast genome: analysis of transcripts from the fern Adiantum capillus-veneris.</title>
        <authorList>
            <person name="Wolf P.G."/>
            <person name="Rowe C.A."/>
            <person name="Hasebe M."/>
        </authorList>
    </citation>
    <scope>NUCLEOTIDE SEQUENCE [GENOMIC DNA]</scope>
    <scope>RNA EDITING</scope>
    <source>
        <tissue>Frond</tissue>
    </source>
</reference>
<geneLocation type="chloroplast"/>
<feature type="chain" id="PRO_0000118502" description="NAD(P)H-quinone oxidoreductase subunit 4L, chloroplastic">
    <location>
        <begin position="1"/>
        <end position="99"/>
    </location>
</feature>
<feature type="transmembrane region" description="Helical" evidence="1">
    <location>
        <begin position="1"/>
        <end position="21"/>
    </location>
</feature>
<feature type="transmembrane region" description="Helical" evidence="1">
    <location>
        <begin position="31"/>
        <end position="51"/>
    </location>
</feature>
<feature type="transmembrane region" description="Helical" evidence="1">
    <location>
        <begin position="59"/>
        <end position="79"/>
    </location>
</feature>
<evidence type="ECO:0000255" key="1">
    <source>
        <dbReference type="HAMAP-Rule" id="MF_01456"/>
    </source>
</evidence>
<evidence type="ECO:0000269" key="2">
    <source>
    </source>
</evidence>
<evidence type="ECO:0000305" key="3"/>
<name>NU4LC_ADICA</name>
<organism>
    <name type="scientific">Adiantum capillus-veneris</name>
    <name type="common">Maidenhair fern</name>
    <dbReference type="NCBI Taxonomy" id="13818"/>
    <lineage>
        <taxon>Eukaryota</taxon>
        <taxon>Viridiplantae</taxon>
        <taxon>Streptophyta</taxon>
        <taxon>Embryophyta</taxon>
        <taxon>Tracheophyta</taxon>
        <taxon>Polypodiopsida</taxon>
        <taxon>Polypodiidae</taxon>
        <taxon>Polypodiales</taxon>
        <taxon>Pteridineae</taxon>
        <taxon>Pteridaceae</taxon>
        <taxon>Vittarioideae</taxon>
        <taxon>Adiantum</taxon>
    </lineage>
</organism>
<dbReference type="EC" id="7.1.1.-" evidence="1"/>
<dbReference type="EMBL" id="AY178864">
    <property type="protein sequence ID" value="AAP29443.2"/>
    <property type="status" value="ALT_INIT"/>
    <property type="molecule type" value="Genomic_DNA"/>
</dbReference>
<dbReference type="RefSeq" id="NP_848112.1">
    <property type="nucleotide sequence ID" value="NC_004766.1"/>
</dbReference>
<dbReference type="SMR" id="Q85FH3"/>
<dbReference type="GeneID" id="807453"/>
<dbReference type="GO" id="GO:0009535">
    <property type="term" value="C:chloroplast thylakoid membrane"/>
    <property type="evidence" value="ECO:0007669"/>
    <property type="project" value="UniProtKB-SubCell"/>
</dbReference>
<dbReference type="GO" id="GO:0030964">
    <property type="term" value="C:NADH dehydrogenase complex"/>
    <property type="evidence" value="ECO:0007669"/>
    <property type="project" value="TreeGrafter"/>
</dbReference>
<dbReference type="GO" id="GO:0016655">
    <property type="term" value="F:oxidoreductase activity, acting on NAD(P)H, quinone or similar compound as acceptor"/>
    <property type="evidence" value="ECO:0007669"/>
    <property type="project" value="UniProtKB-UniRule"/>
</dbReference>
<dbReference type="GO" id="GO:0048038">
    <property type="term" value="F:quinone binding"/>
    <property type="evidence" value="ECO:0007669"/>
    <property type="project" value="UniProtKB-KW"/>
</dbReference>
<dbReference type="GO" id="GO:0042773">
    <property type="term" value="P:ATP synthesis coupled electron transport"/>
    <property type="evidence" value="ECO:0007669"/>
    <property type="project" value="InterPro"/>
</dbReference>
<dbReference type="GO" id="GO:0019684">
    <property type="term" value="P:photosynthesis, light reaction"/>
    <property type="evidence" value="ECO:0007669"/>
    <property type="project" value="UniProtKB-UniRule"/>
</dbReference>
<dbReference type="FunFam" id="1.10.287.3510:FF:000001">
    <property type="entry name" value="NADH-quinone oxidoreductase subunit K"/>
    <property type="match status" value="1"/>
</dbReference>
<dbReference type="Gene3D" id="1.10.287.3510">
    <property type="match status" value="1"/>
</dbReference>
<dbReference type="HAMAP" id="MF_01456">
    <property type="entry name" value="NDH1_NuoK"/>
    <property type="match status" value="1"/>
</dbReference>
<dbReference type="InterPro" id="IPR001133">
    <property type="entry name" value="NADH_UbQ_OxRdtase_chain4L/K"/>
</dbReference>
<dbReference type="InterPro" id="IPR039428">
    <property type="entry name" value="NUOK/Mnh_C1-like"/>
</dbReference>
<dbReference type="NCBIfam" id="NF004320">
    <property type="entry name" value="PRK05715.1-2"/>
    <property type="match status" value="1"/>
</dbReference>
<dbReference type="PANTHER" id="PTHR11434:SF16">
    <property type="entry name" value="NADH-UBIQUINONE OXIDOREDUCTASE CHAIN 4L"/>
    <property type="match status" value="1"/>
</dbReference>
<dbReference type="PANTHER" id="PTHR11434">
    <property type="entry name" value="NADH-UBIQUINONE OXIDOREDUCTASE SUBUNIT ND4L"/>
    <property type="match status" value="1"/>
</dbReference>
<dbReference type="Pfam" id="PF00420">
    <property type="entry name" value="Oxidored_q2"/>
    <property type="match status" value="1"/>
</dbReference>
<comment type="function">
    <text evidence="1">NDH shuttles electrons from NAD(P)H:plastoquinone, via FMN and iron-sulfur (Fe-S) centers, to quinones in the photosynthetic chain and possibly in a chloroplast respiratory chain. The immediate electron acceptor for the enzyme in this species is believed to be plastoquinone. Couples the redox reaction to proton translocation, and thus conserves the redox energy in a proton gradient.</text>
</comment>
<comment type="catalytic activity">
    <reaction evidence="1">
        <text>a plastoquinone + NADH + (n+1) H(+)(in) = a plastoquinol + NAD(+) + n H(+)(out)</text>
        <dbReference type="Rhea" id="RHEA:42608"/>
        <dbReference type="Rhea" id="RHEA-COMP:9561"/>
        <dbReference type="Rhea" id="RHEA-COMP:9562"/>
        <dbReference type="ChEBI" id="CHEBI:15378"/>
        <dbReference type="ChEBI" id="CHEBI:17757"/>
        <dbReference type="ChEBI" id="CHEBI:57540"/>
        <dbReference type="ChEBI" id="CHEBI:57945"/>
        <dbReference type="ChEBI" id="CHEBI:62192"/>
    </reaction>
</comment>
<comment type="catalytic activity">
    <reaction evidence="1">
        <text>a plastoquinone + NADPH + (n+1) H(+)(in) = a plastoquinol + NADP(+) + n H(+)(out)</text>
        <dbReference type="Rhea" id="RHEA:42612"/>
        <dbReference type="Rhea" id="RHEA-COMP:9561"/>
        <dbReference type="Rhea" id="RHEA-COMP:9562"/>
        <dbReference type="ChEBI" id="CHEBI:15378"/>
        <dbReference type="ChEBI" id="CHEBI:17757"/>
        <dbReference type="ChEBI" id="CHEBI:57783"/>
        <dbReference type="ChEBI" id="CHEBI:58349"/>
        <dbReference type="ChEBI" id="CHEBI:62192"/>
    </reaction>
</comment>
<comment type="subunit">
    <text evidence="1">NDH is composed of at least 16 different subunits, 5 of which are encoded in the nucleus.</text>
</comment>
<comment type="subcellular location">
    <subcellularLocation>
        <location evidence="1">Plastid</location>
        <location evidence="1">Chloroplast thylakoid membrane</location>
        <topology evidence="1">Multi-pass membrane protein</topology>
    </subcellularLocation>
</comment>
<comment type="RNA editing">
    <location>
        <position position="1" evidence="2"/>
    </location>
    <text>The initiator methionine is created by RNA editing.</text>
</comment>
<comment type="similarity">
    <text evidence="1">Belongs to the complex I subunit 4L family.</text>
</comment>
<comment type="sequence caution" evidence="3">
    <conflict type="erroneous initiation">
        <sequence resource="EMBL-CDS" id="AAP29443"/>
    </conflict>
</comment>
<accession>Q85FH3</accession>
<protein>
    <recommendedName>
        <fullName evidence="1">NAD(P)H-quinone oxidoreductase subunit 4L, chloroplastic</fullName>
        <ecNumber evidence="1">7.1.1.-</ecNumber>
    </recommendedName>
    <alternativeName>
        <fullName evidence="1">NAD(P)H dehydrogenase subunit 4L</fullName>
    </alternativeName>
    <alternativeName>
        <fullName evidence="1">NADH-plastoquinone oxidoreductase subunit 4L</fullName>
    </alternativeName>
</protein>
<keyword id="KW-0150">Chloroplast</keyword>
<keyword id="KW-0472">Membrane</keyword>
<keyword id="KW-0520">NAD</keyword>
<keyword id="KW-0521">NADP</keyword>
<keyword id="KW-0934">Plastid</keyword>
<keyword id="KW-0618">Plastoquinone</keyword>
<keyword id="KW-0874">Quinone</keyword>
<keyword id="KW-0691">RNA editing</keyword>
<keyword id="KW-0793">Thylakoid</keyword>
<keyword id="KW-1278">Translocase</keyword>
<keyword id="KW-0812">Transmembrane</keyword>
<keyword id="KW-1133">Transmembrane helix</keyword>
<keyword id="KW-0813">Transport</keyword>